<sequence>MNQTAINRADARTRFIFDDMPVRGLHVRLENVWHHIVKQKNYPAAIRCALGELLAAGVLLSGNLKNEGTLIVQVQGQGKLKMLVAEATSDRTVRATARWDETAEIADDESLGDLLGGNGVFVLTLQPKDGEPWQGVVPLEGGSIAQMLVNYMKRSEQLDTHIALSASDEAAGGLLVQRLPEEVLDEEAWEHVSTLARTLTAEELAELDAQHVLYRLFHETPPRVFEPETFESSCTCSRGKVSDMLLMLGGEEVGGVVAEQGSIEVDCDFCHSKYVFDETDVNALFGEDVVGVAKGLPRHTVQ</sequence>
<evidence type="ECO:0000255" key="1">
    <source>
        <dbReference type="HAMAP-Rule" id="MF_00117"/>
    </source>
</evidence>
<feature type="chain" id="PRO_0000238076" description="33 kDa chaperonin">
    <location>
        <begin position="1"/>
        <end position="302"/>
    </location>
</feature>
<feature type="disulfide bond" description="Redox-active" evidence="1">
    <location>
        <begin position="234"/>
        <end position="236"/>
    </location>
</feature>
<feature type="disulfide bond" description="Redox-active" evidence="1">
    <location>
        <begin position="267"/>
        <end position="270"/>
    </location>
</feature>
<comment type="function">
    <text evidence="1">Redox regulated molecular chaperone. Protects both thermally unfolding and oxidatively damaged proteins from irreversible aggregation. Plays an important role in the bacterial defense system toward oxidative stress.</text>
</comment>
<comment type="subcellular location">
    <subcellularLocation>
        <location evidence="1">Cytoplasm</location>
    </subcellularLocation>
</comment>
<comment type="PTM">
    <text evidence="1">Under oxidizing conditions two disulfide bonds are formed involving the reactive cysteines. Under reducing conditions zinc is bound to the reactive cysteines and the protein is inactive.</text>
</comment>
<comment type="similarity">
    <text evidence="1">Belongs to the HSP33 family.</text>
</comment>
<gene>
    <name evidence="1" type="primary">hslO</name>
    <name type="ordered locus">NGO_1189</name>
</gene>
<reference key="1">
    <citation type="submission" date="2003-03" db="EMBL/GenBank/DDBJ databases">
        <title>The complete genome sequence of Neisseria gonorrhoeae.</title>
        <authorList>
            <person name="Lewis L.A."/>
            <person name="Gillaspy A.F."/>
            <person name="McLaughlin R.E."/>
            <person name="Gipson M."/>
            <person name="Ducey T.F."/>
            <person name="Ownbey T."/>
            <person name="Hartman K."/>
            <person name="Nydick C."/>
            <person name="Carson M.B."/>
            <person name="Vaughn J."/>
            <person name="Thomson C."/>
            <person name="Song L."/>
            <person name="Lin S."/>
            <person name="Yuan X."/>
            <person name="Najar F."/>
            <person name="Zhan M."/>
            <person name="Ren Q."/>
            <person name="Zhu H."/>
            <person name="Qi S."/>
            <person name="Kenton S.M."/>
            <person name="Lai H."/>
            <person name="White J.D."/>
            <person name="Clifton S."/>
            <person name="Roe B.A."/>
            <person name="Dyer D.W."/>
        </authorList>
    </citation>
    <scope>NUCLEOTIDE SEQUENCE [LARGE SCALE GENOMIC DNA]</scope>
    <source>
        <strain>ATCC 700825 / FA 1090</strain>
    </source>
</reference>
<organism>
    <name type="scientific">Neisseria gonorrhoeae (strain ATCC 700825 / FA 1090)</name>
    <dbReference type="NCBI Taxonomy" id="242231"/>
    <lineage>
        <taxon>Bacteria</taxon>
        <taxon>Pseudomonadati</taxon>
        <taxon>Pseudomonadota</taxon>
        <taxon>Betaproteobacteria</taxon>
        <taxon>Neisseriales</taxon>
        <taxon>Neisseriaceae</taxon>
        <taxon>Neisseria</taxon>
    </lineage>
</organism>
<name>HSLO_NEIG1</name>
<protein>
    <recommendedName>
        <fullName evidence="1">33 kDa chaperonin</fullName>
    </recommendedName>
    <alternativeName>
        <fullName evidence="1">Heat shock protein 33 homolog</fullName>
        <shortName evidence="1">HSP33</shortName>
    </alternativeName>
</protein>
<keyword id="KW-0143">Chaperone</keyword>
<keyword id="KW-0963">Cytoplasm</keyword>
<keyword id="KW-1015">Disulfide bond</keyword>
<keyword id="KW-0676">Redox-active center</keyword>
<keyword id="KW-1185">Reference proteome</keyword>
<keyword id="KW-0862">Zinc</keyword>
<accession>Q5F7I8</accession>
<dbReference type="EMBL" id="AE004969">
    <property type="protein sequence ID" value="AAW89849.1"/>
    <property type="molecule type" value="Genomic_DNA"/>
</dbReference>
<dbReference type="RefSeq" id="WP_010951210.1">
    <property type="nucleotide sequence ID" value="NC_002946.2"/>
</dbReference>
<dbReference type="RefSeq" id="YP_208261.1">
    <property type="nucleotide sequence ID" value="NC_002946.2"/>
</dbReference>
<dbReference type="SMR" id="Q5F7I8"/>
<dbReference type="STRING" id="242231.NGO_1189"/>
<dbReference type="KEGG" id="ngo:NGO_1189"/>
<dbReference type="PATRIC" id="fig|242231.10.peg.1396"/>
<dbReference type="HOGENOM" id="CLU_054493_0_0_4"/>
<dbReference type="Proteomes" id="UP000000535">
    <property type="component" value="Chromosome"/>
</dbReference>
<dbReference type="GO" id="GO:0005737">
    <property type="term" value="C:cytoplasm"/>
    <property type="evidence" value="ECO:0007669"/>
    <property type="project" value="UniProtKB-SubCell"/>
</dbReference>
<dbReference type="GO" id="GO:0044183">
    <property type="term" value="F:protein folding chaperone"/>
    <property type="evidence" value="ECO:0007669"/>
    <property type="project" value="TreeGrafter"/>
</dbReference>
<dbReference type="GO" id="GO:0051082">
    <property type="term" value="F:unfolded protein binding"/>
    <property type="evidence" value="ECO:0007669"/>
    <property type="project" value="UniProtKB-UniRule"/>
</dbReference>
<dbReference type="GO" id="GO:0042026">
    <property type="term" value="P:protein refolding"/>
    <property type="evidence" value="ECO:0007669"/>
    <property type="project" value="TreeGrafter"/>
</dbReference>
<dbReference type="CDD" id="cd00498">
    <property type="entry name" value="Hsp33"/>
    <property type="match status" value="1"/>
</dbReference>
<dbReference type="Gene3D" id="1.10.287.480">
    <property type="entry name" value="helix hairpin bin"/>
    <property type="match status" value="1"/>
</dbReference>
<dbReference type="Gene3D" id="3.55.30.10">
    <property type="entry name" value="Hsp33 domain"/>
    <property type="match status" value="1"/>
</dbReference>
<dbReference type="Gene3D" id="3.90.1280.10">
    <property type="entry name" value="HSP33 redox switch-like"/>
    <property type="match status" value="1"/>
</dbReference>
<dbReference type="HAMAP" id="MF_00117">
    <property type="entry name" value="HslO"/>
    <property type="match status" value="1"/>
</dbReference>
<dbReference type="InterPro" id="IPR000397">
    <property type="entry name" value="Heat_shock_Hsp33"/>
</dbReference>
<dbReference type="InterPro" id="IPR016154">
    <property type="entry name" value="Heat_shock_Hsp33_C"/>
</dbReference>
<dbReference type="InterPro" id="IPR016153">
    <property type="entry name" value="Heat_shock_Hsp33_N"/>
</dbReference>
<dbReference type="InterPro" id="IPR023212">
    <property type="entry name" value="Hsp33_helix_hairpin_bin_dom_sf"/>
</dbReference>
<dbReference type="NCBIfam" id="NF001033">
    <property type="entry name" value="PRK00114.1"/>
    <property type="match status" value="1"/>
</dbReference>
<dbReference type="PANTHER" id="PTHR30111">
    <property type="entry name" value="33 KDA CHAPERONIN"/>
    <property type="match status" value="1"/>
</dbReference>
<dbReference type="PANTHER" id="PTHR30111:SF1">
    <property type="entry name" value="33 KDA CHAPERONIN"/>
    <property type="match status" value="1"/>
</dbReference>
<dbReference type="Pfam" id="PF01430">
    <property type="entry name" value="HSP33"/>
    <property type="match status" value="1"/>
</dbReference>
<dbReference type="PIRSF" id="PIRSF005261">
    <property type="entry name" value="Heat_shock_Hsp33"/>
    <property type="match status" value="1"/>
</dbReference>
<dbReference type="SUPFAM" id="SSF64397">
    <property type="entry name" value="Hsp33 domain"/>
    <property type="match status" value="1"/>
</dbReference>
<dbReference type="SUPFAM" id="SSF118352">
    <property type="entry name" value="HSP33 redox switch-like"/>
    <property type="match status" value="1"/>
</dbReference>
<proteinExistence type="inferred from homology"/>